<proteinExistence type="inferred from homology"/>
<keyword id="KW-0131">Cell cycle</keyword>
<keyword id="KW-0132">Cell division</keyword>
<keyword id="KW-0997">Cell inner membrane</keyword>
<keyword id="KW-1003">Cell membrane</keyword>
<keyword id="KW-0133">Cell shape</keyword>
<keyword id="KW-0961">Cell wall biogenesis/degradation</keyword>
<keyword id="KW-0328">Glycosyltransferase</keyword>
<keyword id="KW-0472">Membrane</keyword>
<keyword id="KW-0573">Peptidoglycan synthesis</keyword>
<keyword id="KW-0808">Transferase</keyword>
<sequence length="364" mass="38496">MKVLFAGGGTGGHLYPGVAMASELKKVVPGVEISFAGTPAGIEATEVPRLGYPLHLLPVRGLKRGRSLRDLAANVGVLKDFGSSLMQAFSIIRKETPNVVVGTGGYVSAPLLLAAQLSGCKTLIQEQNAFPGVTTRMLARMASEVHLSFAESRKFFGDSKNVFVTGNPAREFPAEPRQACLDFFGLRGDLPTLLVFGGSRGARAINNALLRFCGRLEGKINLIWQTGSLDAERVTAEVSSSSTRWIGPYIQEMGKAYGAADLVLCRAGASSLAELTNLGKPSVLAPYPYAAADHQRHNARALVNAGAAIMIEDTNLADDASLETILDLLGDSERLDRMGHASRSEGYPGAAAELAGRIIALSKS</sequence>
<name>MURG_CHLP8</name>
<gene>
    <name evidence="1" type="primary">murG</name>
    <name type="ordered locus">Cpar_2064</name>
</gene>
<comment type="function">
    <text evidence="1">Cell wall formation. Catalyzes the transfer of a GlcNAc subunit on undecaprenyl-pyrophosphoryl-MurNAc-pentapeptide (lipid intermediate I) to form undecaprenyl-pyrophosphoryl-MurNAc-(pentapeptide)GlcNAc (lipid intermediate II).</text>
</comment>
<comment type="catalytic activity">
    <reaction evidence="1">
        <text>di-trans,octa-cis-undecaprenyl diphospho-N-acetyl-alpha-D-muramoyl-L-alanyl-D-glutamyl-meso-2,6-diaminopimeloyl-D-alanyl-D-alanine + UDP-N-acetyl-alpha-D-glucosamine = di-trans,octa-cis-undecaprenyl diphospho-[N-acetyl-alpha-D-glucosaminyl-(1-&gt;4)]-N-acetyl-alpha-D-muramoyl-L-alanyl-D-glutamyl-meso-2,6-diaminopimeloyl-D-alanyl-D-alanine + UDP + H(+)</text>
        <dbReference type="Rhea" id="RHEA:31227"/>
        <dbReference type="ChEBI" id="CHEBI:15378"/>
        <dbReference type="ChEBI" id="CHEBI:57705"/>
        <dbReference type="ChEBI" id="CHEBI:58223"/>
        <dbReference type="ChEBI" id="CHEBI:61387"/>
        <dbReference type="ChEBI" id="CHEBI:61388"/>
        <dbReference type="EC" id="2.4.1.227"/>
    </reaction>
</comment>
<comment type="pathway">
    <text evidence="1">Cell wall biogenesis; peptidoglycan biosynthesis.</text>
</comment>
<comment type="subcellular location">
    <subcellularLocation>
        <location evidence="1">Cell inner membrane</location>
        <topology evidence="1">Peripheral membrane protein</topology>
        <orientation evidence="1">Cytoplasmic side</orientation>
    </subcellularLocation>
</comment>
<comment type="similarity">
    <text evidence="1">Belongs to the glycosyltransferase 28 family. MurG subfamily.</text>
</comment>
<feature type="chain" id="PRO_1000090416" description="UDP-N-acetylglucosamine--N-acetylmuramyl-(pentapeptide) pyrophosphoryl-undecaprenol N-acetylglucosamine transferase">
    <location>
        <begin position="1"/>
        <end position="364"/>
    </location>
</feature>
<feature type="binding site" evidence="1">
    <location>
        <begin position="10"/>
        <end position="12"/>
    </location>
    <ligand>
        <name>UDP-N-acetyl-alpha-D-glucosamine</name>
        <dbReference type="ChEBI" id="CHEBI:57705"/>
    </ligand>
</feature>
<feature type="binding site" evidence="1">
    <location>
        <position position="128"/>
    </location>
    <ligand>
        <name>UDP-N-acetyl-alpha-D-glucosamine</name>
        <dbReference type="ChEBI" id="CHEBI:57705"/>
    </ligand>
</feature>
<feature type="binding site" evidence="1">
    <location>
        <position position="170"/>
    </location>
    <ligand>
        <name>UDP-N-acetyl-alpha-D-glucosamine</name>
        <dbReference type="ChEBI" id="CHEBI:57705"/>
    </ligand>
</feature>
<feature type="binding site" evidence="1">
    <location>
        <position position="199"/>
    </location>
    <ligand>
        <name>UDP-N-acetyl-alpha-D-glucosamine</name>
        <dbReference type="ChEBI" id="CHEBI:57705"/>
    </ligand>
</feature>
<feature type="binding site" evidence="1">
    <location>
        <position position="250"/>
    </location>
    <ligand>
        <name>UDP-N-acetyl-alpha-D-glucosamine</name>
        <dbReference type="ChEBI" id="CHEBI:57705"/>
    </ligand>
</feature>
<feature type="binding site" evidence="1">
    <location>
        <position position="295"/>
    </location>
    <ligand>
        <name>UDP-N-acetyl-alpha-D-glucosamine</name>
        <dbReference type="ChEBI" id="CHEBI:57705"/>
    </ligand>
</feature>
<dbReference type="EC" id="2.4.1.227" evidence="1"/>
<dbReference type="EMBL" id="CP001099">
    <property type="protein sequence ID" value="ACF12450.1"/>
    <property type="molecule type" value="Genomic_DNA"/>
</dbReference>
<dbReference type="RefSeq" id="WP_012503283.1">
    <property type="nucleotide sequence ID" value="NC_011027.1"/>
</dbReference>
<dbReference type="SMR" id="B3QLW4"/>
<dbReference type="STRING" id="517417.Cpar_2064"/>
<dbReference type="CAZy" id="GT28">
    <property type="family name" value="Glycosyltransferase Family 28"/>
</dbReference>
<dbReference type="KEGG" id="cpc:Cpar_2064"/>
<dbReference type="eggNOG" id="COG0707">
    <property type="taxonomic scope" value="Bacteria"/>
</dbReference>
<dbReference type="HOGENOM" id="CLU_037404_0_1_10"/>
<dbReference type="OrthoDB" id="9808936at2"/>
<dbReference type="UniPathway" id="UPA00219"/>
<dbReference type="Proteomes" id="UP000008811">
    <property type="component" value="Chromosome"/>
</dbReference>
<dbReference type="GO" id="GO:0005886">
    <property type="term" value="C:plasma membrane"/>
    <property type="evidence" value="ECO:0007669"/>
    <property type="project" value="UniProtKB-SubCell"/>
</dbReference>
<dbReference type="GO" id="GO:0051991">
    <property type="term" value="F:UDP-N-acetyl-D-glucosamine:N-acetylmuramoyl-L-alanyl-D-glutamyl-meso-2,6-diaminopimelyl-D-alanyl-D-alanine-diphosphoundecaprenol 4-beta-N-acetylglucosaminlytransferase activity"/>
    <property type="evidence" value="ECO:0007669"/>
    <property type="project" value="RHEA"/>
</dbReference>
<dbReference type="GO" id="GO:0050511">
    <property type="term" value="F:undecaprenyldiphospho-muramoylpentapeptide beta-N-acetylglucosaminyltransferase activity"/>
    <property type="evidence" value="ECO:0007669"/>
    <property type="project" value="UniProtKB-UniRule"/>
</dbReference>
<dbReference type="GO" id="GO:0005975">
    <property type="term" value="P:carbohydrate metabolic process"/>
    <property type="evidence" value="ECO:0007669"/>
    <property type="project" value="InterPro"/>
</dbReference>
<dbReference type="GO" id="GO:0051301">
    <property type="term" value="P:cell division"/>
    <property type="evidence" value="ECO:0007669"/>
    <property type="project" value="UniProtKB-KW"/>
</dbReference>
<dbReference type="GO" id="GO:0071555">
    <property type="term" value="P:cell wall organization"/>
    <property type="evidence" value="ECO:0007669"/>
    <property type="project" value="UniProtKB-KW"/>
</dbReference>
<dbReference type="GO" id="GO:0030259">
    <property type="term" value="P:lipid glycosylation"/>
    <property type="evidence" value="ECO:0007669"/>
    <property type="project" value="UniProtKB-UniRule"/>
</dbReference>
<dbReference type="GO" id="GO:0009252">
    <property type="term" value="P:peptidoglycan biosynthetic process"/>
    <property type="evidence" value="ECO:0007669"/>
    <property type="project" value="UniProtKB-UniRule"/>
</dbReference>
<dbReference type="GO" id="GO:0008360">
    <property type="term" value="P:regulation of cell shape"/>
    <property type="evidence" value="ECO:0007669"/>
    <property type="project" value="UniProtKB-KW"/>
</dbReference>
<dbReference type="CDD" id="cd03785">
    <property type="entry name" value="GT28_MurG"/>
    <property type="match status" value="1"/>
</dbReference>
<dbReference type="Gene3D" id="3.40.50.2000">
    <property type="entry name" value="Glycogen Phosphorylase B"/>
    <property type="match status" value="2"/>
</dbReference>
<dbReference type="HAMAP" id="MF_00033">
    <property type="entry name" value="MurG"/>
    <property type="match status" value="1"/>
</dbReference>
<dbReference type="InterPro" id="IPR006009">
    <property type="entry name" value="GlcNAc_MurG"/>
</dbReference>
<dbReference type="InterPro" id="IPR007235">
    <property type="entry name" value="Glyco_trans_28_C"/>
</dbReference>
<dbReference type="InterPro" id="IPR004276">
    <property type="entry name" value="GlycoTrans_28_N"/>
</dbReference>
<dbReference type="NCBIfam" id="TIGR01133">
    <property type="entry name" value="murG"/>
    <property type="match status" value="1"/>
</dbReference>
<dbReference type="PANTHER" id="PTHR21015:SF22">
    <property type="entry name" value="GLYCOSYLTRANSFERASE"/>
    <property type="match status" value="1"/>
</dbReference>
<dbReference type="PANTHER" id="PTHR21015">
    <property type="entry name" value="UDP-N-ACETYLGLUCOSAMINE--N-ACETYLMURAMYL-(PENTAPEPTIDE) PYROPHOSPHORYL-UNDECAPRENOL N-ACETYLGLUCOSAMINE TRANSFERASE 1"/>
    <property type="match status" value="1"/>
</dbReference>
<dbReference type="Pfam" id="PF04101">
    <property type="entry name" value="Glyco_tran_28_C"/>
    <property type="match status" value="1"/>
</dbReference>
<dbReference type="Pfam" id="PF03033">
    <property type="entry name" value="Glyco_transf_28"/>
    <property type="match status" value="1"/>
</dbReference>
<dbReference type="SUPFAM" id="SSF53756">
    <property type="entry name" value="UDP-Glycosyltransferase/glycogen phosphorylase"/>
    <property type="match status" value="1"/>
</dbReference>
<organism>
    <name type="scientific">Chlorobaculum parvum (strain DSM 263 / NCIMB 8327)</name>
    <name type="common">Chlorobium vibrioforme subsp. thiosulfatophilum</name>
    <dbReference type="NCBI Taxonomy" id="517417"/>
    <lineage>
        <taxon>Bacteria</taxon>
        <taxon>Pseudomonadati</taxon>
        <taxon>Chlorobiota</taxon>
        <taxon>Chlorobiia</taxon>
        <taxon>Chlorobiales</taxon>
        <taxon>Chlorobiaceae</taxon>
        <taxon>Chlorobaculum</taxon>
    </lineage>
</organism>
<protein>
    <recommendedName>
        <fullName evidence="1">UDP-N-acetylglucosamine--N-acetylmuramyl-(pentapeptide) pyrophosphoryl-undecaprenol N-acetylglucosamine transferase</fullName>
        <ecNumber evidence="1">2.4.1.227</ecNumber>
    </recommendedName>
    <alternativeName>
        <fullName evidence="1">Undecaprenyl-PP-MurNAc-pentapeptide-UDPGlcNAc GlcNAc transferase</fullName>
    </alternativeName>
</protein>
<reference key="1">
    <citation type="submission" date="2008-06" db="EMBL/GenBank/DDBJ databases">
        <title>Complete sequence of Chlorobaculum parvum NCIB 8327.</title>
        <authorList>
            <consortium name="US DOE Joint Genome Institute"/>
            <person name="Lucas S."/>
            <person name="Copeland A."/>
            <person name="Lapidus A."/>
            <person name="Glavina del Rio T."/>
            <person name="Dalin E."/>
            <person name="Tice H."/>
            <person name="Bruce D."/>
            <person name="Goodwin L."/>
            <person name="Pitluck S."/>
            <person name="Schmutz J."/>
            <person name="Larimer F."/>
            <person name="Land M."/>
            <person name="Hauser L."/>
            <person name="Kyrpides N."/>
            <person name="Mikhailova N."/>
            <person name="Zhao F."/>
            <person name="Li T."/>
            <person name="Liu Z."/>
            <person name="Overmann J."/>
            <person name="Bryant D.A."/>
            <person name="Richardson P."/>
        </authorList>
    </citation>
    <scope>NUCLEOTIDE SEQUENCE [LARGE SCALE GENOMIC DNA]</scope>
    <source>
        <strain>DSM 263 / NCIMB 8327</strain>
    </source>
</reference>
<accession>B3QLW4</accession>
<evidence type="ECO:0000255" key="1">
    <source>
        <dbReference type="HAMAP-Rule" id="MF_00033"/>
    </source>
</evidence>